<accession>A9MU62</accession>
<name>DCYD_SALPB</name>
<protein>
    <recommendedName>
        <fullName evidence="1">D-cysteine desulfhydrase</fullName>
        <ecNumber evidence="1">4.4.1.15</ecNumber>
    </recommendedName>
</protein>
<reference key="1">
    <citation type="submission" date="2007-11" db="EMBL/GenBank/DDBJ databases">
        <authorList>
            <consortium name="The Salmonella enterica serovar Paratyphi B Genome Sequencing Project"/>
            <person name="McClelland M."/>
            <person name="Sanderson E.K."/>
            <person name="Porwollik S."/>
            <person name="Spieth J."/>
            <person name="Clifton W.S."/>
            <person name="Fulton R."/>
            <person name="Cordes M."/>
            <person name="Wollam A."/>
            <person name="Shah N."/>
            <person name="Pepin K."/>
            <person name="Bhonagiri V."/>
            <person name="Nash W."/>
            <person name="Johnson M."/>
            <person name="Thiruvilangam P."/>
            <person name="Wilson R."/>
        </authorList>
    </citation>
    <scope>NUCLEOTIDE SEQUENCE [LARGE SCALE GENOMIC DNA]</scope>
    <source>
        <strain>ATCC BAA-1250 / SPB7</strain>
    </source>
</reference>
<dbReference type="EC" id="4.4.1.15" evidence="1"/>
<dbReference type="EMBL" id="CP000886">
    <property type="protein sequence ID" value="ABX66618.1"/>
    <property type="molecule type" value="Genomic_DNA"/>
</dbReference>
<dbReference type="RefSeq" id="WP_001128189.1">
    <property type="nucleotide sequence ID" value="NC_010102.1"/>
</dbReference>
<dbReference type="SMR" id="A9MU62"/>
<dbReference type="KEGG" id="spq:SPAB_01203"/>
<dbReference type="PATRIC" id="fig|1016998.12.peg.1135"/>
<dbReference type="HOGENOM" id="CLU_048897_1_0_6"/>
<dbReference type="BioCyc" id="SENT1016998:SPAB_RS04985-MONOMER"/>
<dbReference type="Proteomes" id="UP000008556">
    <property type="component" value="Chromosome"/>
</dbReference>
<dbReference type="GO" id="GO:0019148">
    <property type="term" value="F:D-cysteine desulfhydrase activity"/>
    <property type="evidence" value="ECO:0007669"/>
    <property type="project" value="UniProtKB-UniRule"/>
</dbReference>
<dbReference type="GO" id="GO:0046416">
    <property type="term" value="P:D-amino acid metabolic process"/>
    <property type="evidence" value="ECO:0007669"/>
    <property type="project" value="UniProtKB-UniRule"/>
</dbReference>
<dbReference type="CDD" id="cd06449">
    <property type="entry name" value="ACCD"/>
    <property type="match status" value="1"/>
</dbReference>
<dbReference type="FunFam" id="3.40.50.1100:FF:000019">
    <property type="entry name" value="D-cysteine desulfhydrase"/>
    <property type="match status" value="1"/>
</dbReference>
<dbReference type="Gene3D" id="3.40.50.1100">
    <property type="match status" value="2"/>
</dbReference>
<dbReference type="HAMAP" id="MF_01045">
    <property type="entry name" value="D_Cys_desulfhydr"/>
    <property type="match status" value="1"/>
</dbReference>
<dbReference type="InterPro" id="IPR027278">
    <property type="entry name" value="ACCD_DCysDesulf"/>
</dbReference>
<dbReference type="InterPro" id="IPR005966">
    <property type="entry name" value="D-Cys_desShydrase"/>
</dbReference>
<dbReference type="InterPro" id="IPR023702">
    <property type="entry name" value="D_Cys_desulphydr_bac"/>
</dbReference>
<dbReference type="InterPro" id="IPR001926">
    <property type="entry name" value="TrpB-like_PALP"/>
</dbReference>
<dbReference type="InterPro" id="IPR036052">
    <property type="entry name" value="TrpB-like_PALP_sf"/>
</dbReference>
<dbReference type="NCBIfam" id="TIGR01275">
    <property type="entry name" value="ACC_deam_rel"/>
    <property type="match status" value="1"/>
</dbReference>
<dbReference type="NCBIfam" id="NF003029">
    <property type="entry name" value="PRK03910.1-1"/>
    <property type="match status" value="1"/>
</dbReference>
<dbReference type="NCBIfam" id="NF003030">
    <property type="entry name" value="PRK03910.1-3"/>
    <property type="match status" value="1"/>
</dbReference>
<dbReference type="NCBIfam" id="NF003032">
    <property type="entry name" value="PRK03910.1-5"/>
    <property type="match status" value="1"/>
</dbReference>
<dbReference type="PANTHER" id="PTHR43780">
    <property type="entry name" value="1-AMINOCYCLOPROPANE-1-CARBOXYLATE DEAMINASE-RELATED"/>
    <property type="match status" value="1"/>
</dbReference>
<dbReference type="PANTHER" id="PTHR43780:SF2">
    <property type="entry name" value="1-AMINOCYCLOPROPANE-1-CARBOXYLATE DEAMINASE-RELATED"/>
    <property type="match status" value="1"/>
</dbReference>
<dbReference type="Pfam" id="PF00291">
    <property type="entry name" value="PALP"/>
    <property type="match status" value="1"/>
</dbReference>
<dbReference type="PIRSF" id="PIRSF006278">
    <property type="entry name" value="ACCD_DCysDesulf"/>
    <property type="match status" value="1"/>
</dbReference>
<dbReference type="SUPFAM" id="SSF53686">
    <property type="entry name" value="Tryptophan synthase beta subunit-like PLP-dependent enzymes"/>
    <property type="match status" value="1"/>
</dbReference>
<evidence type="ECO:0000255" key="1">
    <source>
        <dbReference type="HAMAP-Rule" id="MF_01045"/>
    </source>
</evidence>
<comment type="function">
    <text evidence="1">Catalyzes the alpha,beta-elimination reaction of D-cysteine and of several D-cysteine derivatives. It could be a defense mechanism against D-cysteine.</text>
</comment>
<comment type="catalytic activity">
    <reaction evidence="1">
        <text>D-cysteine + H2O = hydrogen sulfide + pyruvate + NH4(+) + H(+)</text>
        <dbReference type="Rhea" id="RHEA:11268"/>
        <dbReference type="ChEBI" id="CHEBI:15361"/>
        <dbReference type="ChEBI" id="CHEBI:15377"/>
        <dbReference type="ChEBI" id="CHEBI:15378"/>
        <dbReference type="ChEBI" id="CHEBI:28938"/>
        <dbReference type="ChEBI" id="CHEBI:29919"/>
        <dbReference type="ChEBI" id="CHEBI:35236"/>
        <dbReference type="EC" id="4.4.1.15"/>
    </reaction>
</comment>
<comment type="cofactor">
    <cofactor evidence="1">
        <name>pyridoxal 5'-phosphate</name>
        <dbReference type="ChEBI" id="CHEBI:597326"/>
    </cofactor>
</comment>
<comment type="subunit">
    <text evidence="1">Homodimer.</text>
</comment>
<comment type="similarity">
    <text evidence="1">Belongs to the ACC deaminase/D-cysteine desulfhydrase family.</text>
</comment>
<feature type="chain" id="PRO_1000084408" description="D-cysteine desulfhydrase">
    <location>
        <begin position="1"/>
        <end position="328"/>
    </location>
</feature>
<feature type="modified residue" description="N6-(pyridoxal phosphate)lysine" evidence="1">
    <location>
        <position position="51"/>
    </location>
</feature>
<keyword id="KW-0456">Lyase</keyword>
<keyword id="KW-0663">Pyridoxal phosphate</keyword>
<organism>
    <name type="scientific">Salmonella paratyphi B (strain ATCC BAA-1250 / SPB7)</name>
    <dbReference type="NCBI Taxonomy" id="1016998"/>
    <lineage>
        <taxon>Bacteria</taxon>
        <taxon>Pseudomonadati</taxon>
        <taxon>Pseudomonadota</taxon>
        <taxon>Gammaproteobacteria</taxon>
        <taxon>Enterobacterales</taxon>
        <taxon>Enterobacteriaceae</taxon>
        <taxon>Salmonella</taxon>
    </lineage>
</organism>
<gene>
    <name evidence="1" type="primary">dcyD</name>
    <name type="ordered locus">SPAB_01203</name>
</gene>
<proteinExistence type="inferred from homology"/>
<sequence length="328" mass="34851">MPLHHLTRFPRLELIGAPTPLEYLPRLSDYLGREIYIKRDDVTPIAMGGNKLRKLEFLVADALREGADTLITAGAIQSNHVRQTAAVAAKLGLHCVALLENPIGTTAENYLTNGNRLLLDLFNTQIEMCDALTDPDAQLQTLATRIEAQGFRPYVIPVGGSSALGAMGYVESALEIAQQCEEVVGLSSVVVASGSAGTHAGLAVGLEHLMPDVELIGVTVSRSVAEQKPKVIALQQAIAGQLALTATADIHLWDDYFAPGYGVPNDAGMEAVKLLASLEGVLLDPVYTGKAMAGLIDGISQKRFNDDGPSLFIHTGGAPALFAYHPHV</sequence>